<accession>Q6L1K2</accession>
<organism>
    <name type="scientific">Picrophilus torridus (strain ATCC 700027 / DSM 9790 / JCM 10055 / NBRC 100828 / KAW 2/3)</name>
    <dbReference type="NCBI Taxonomy" id="1122961"/>
    <lineage>
        <taxon>Archaea</taxon>
        <taxon>Methanobacteriati</taxon>
        <taxon>Thermoplasmatota</taxon>
        <taxon>Thermoplasmata</taxon>
        <taxon>Thermoplasmatales</taxon>
        <taxon>Picrophilaceae</taxon>
        <taxon>Picrophilus</taxon>
    </lineage>
</organism>
<dbReference type="EC" id="5.3.1.6" evidence="1"/>
<dbReference type="EMBL" id="AE017261">
    <property type="protein sequence ID" value="AAT43150.1"/>
    <property type="molecule type" value="Genomic_DNA"/>
</dbReference>
<dbReference type="RefSeq" id="WP_011177366.1">
    <property type="nucleotide sequence ID" value="NC_005877.1"/>
</dbReference>
<dbReference type="SMR" id="Q6L1K2"/>
<dbReference type="FunCoup" id="Q6L1K2">
    <property type="interactions" value="267"/>
</dbReference>
<dbReference type="STRING" id="263820.PTO0565"/>
<dbReference type="PaxDb" id="263820-PTO0565"/>
<dbReference type="GeneID" id="2845288"/>
<dbReference type="KEGG" id="pto:PTO0565"/>
<dbReference type="PATRIC" id="fig|263820.9.peg.594"/>
<dbReference type="eggNOG" id="arCOG01122">
    <property type="taxonomic scope" value="Archaea"/>
</dbReference>
<dbReference type="HOGENOM" id="CLU_056590_1_1_2"/>
<dbReference type="InParanoid" id="Q6L1K2"/>
<dbReference type="OrthoDB" id="19013at2157"/>
<dbReference type="UniPathway" id="UPA00115">
    <property type="reaction ID" value="UER00412"/>
</dbReference>
<dbReference type="Proteomes" id="UP000000438">
    <property type="component" value="Chromosome"/>
</dbReference>
<dbReference type="GO" id="GO:0005829">
    <property type="term" value="C:cytosol"/>
    <property type="evidence" value="ECO:0007669"/>
    <property type="project" value="TreeGrafter"/>
</dbReference>
<dbReference type="GO" id="GO:0004751">
    <property type="term" value="F:ribose-5-phosphate isomerase activity"/>
    <property type="evidence" value="ECO:0007669"/>
    <property type="project" value="UniProtKB-UniRule"/>
</dbReference>
<dbReference type="GO" id="GO:0006014">
    <property type="term" value="P:D-ribose metabolic process"/>
    <property type="evidence" value="ECO:0007669"/>
    <property type="project" value="TreeGrafter"/>
</dbReference>
<dbReference type="GO" id="GO:0009052">
    <property type="term" value="P:pentose-phosphate shunt, non-oxidative branch"/>
    <property type="evidence" value="ECO:0007669"/>
    <property type="project" value="UniProtKB-UniRule"/>
</dbReference>
<dbReference type="CDD" id="cd01398">
    <property type="entry name" value="RPI_A"/>
    <property type="match status" value="1"/>
</dbReference>
<dbReference type="FunFam" id="3.40.50.1360:FF:000001">
    <property type="entry name" value="Ribose-5-phosphate isomerase A"/>
    <property type="match status" value="1"/>
</dbReference>
<dbReference type="Gene3D" id="3.30.70.260">
    <property type="match status" value="1"/>
</dbReference>
<dbReference type="Gene3D" id="3.40.50.1360">
    <property type="match status" value="1"/>
</dbReference>
<dbReference type="HAMAP" id="MF_00170">
    <property type="entry name" value="Rib_5P_isom_A"/>
    <property type="match status" value="1"/>
</dbReference>
<dbReference type="InterPro" id="IPR037171">
    <property type="entry name" value="NagB/RpiA_transferase-like"/>
</dbReference>
<dbReference type="InterPro" id="IPR020672">
    <property type="entry name" value="Ribose5P_isomerase_typA_subgr"/>
</dbReference>
<dbReference type="InterPro" id="IPR004788">
    <property type="entry name" value="Ribose5P_isomerase_type_A"/>
</dbReference>
<dbReference type="NCBIfam" id="NF001924">
    <property type="entry name" value="PRK00702.1"/>
    <property type="match status" value="1"/>
</dbReference>
<dbReference type="NCBIfam" id="TIGR00021">
    <property type="entry name" value="rpiA"/>
    <property type="match status" value="1"/>
</dbReference>
<dbReference type="PANTHER" id="PTHR11934">
    <property type="entry name" value="RIBOSE-5-PHOSPHATE ISOMERASE"/>
    <property type="match status" value="1"/>
</dbReference>
<dbReference type="PANTHER" id="PTHR11934:SF0">
    <property type="entry name" value="RIBOSE-5-PHOSPHATE ISOMERASE"/>
    <property type="match status" value="1"/>
</dbReference>
<dbReference type="Pfam" id="PF06026">
    <property type="entry name" value="Rib_5-P_isom_A"/>
    <property type="match status" value="1"/>
</dbReference>
<dbReference type="SUPFAM" id="SSF75445">
    <property type="entry name" value="D-ribose-5-phosphate isomerase (RpiA), lid domain"/>
    <property type="match status" value="1"/>
</dbReference>
<dbReference type="SUPFAM" id="SSF100950">
    <property type="entry name" value="NagB/RpiA/CoA transferase-like"/>
    <property type="match status" value="1"/>
</dbReference>
<feature type="chain" id="PRO_0000158514" description="Ribose-5-phosphate isomerase A">
    <location>
        <begin position="1"/>
        <end position="218"/>
    </location>
</feature>
<feature type="active site" description="Proton acceptor" evidence="1">
    <location>
        <position position="102"/>
    </location>
</feature>
<feature type="binding site" evidence="1">
    <location>
        <begin position="27"/>
        <end position="30"/>
    </location>
    <ligand>
        <name>substrate</name>
    </ligand>
</feature>
<feature type="binding site" evidence="1">
    <location>
        <begin position="80"/>
        <end position="83"/>
    </location>
    <ligand>
        <name>substrate</name>
    </ligand>
</feature>
<feature type="binding site" evidence="1">
    <location>
        <begin position="93"/>
        <end position="96"/>
    </location>
    <ligand>
        <name>substrate</name>
    </ligand>
</feature>
<feature type="binding site" evidence="1">
    <location>
        <position position="120"/>
    </location>
    <ligand>
        <name>substrate</name>
    </ligand>
</feature>
<proteinExistence type="inferred from homology"/>
<gene>
    <name evidence="1" type="primary">rpiA</name>
    <name type="ordered locus">PTO0565</name>
</gene>
<reference key="1">
    <citation type="journal article" date="2004" name="Proc. Natl. Acad. Sci. U.S.A.">
        <title>Genome sequence of Picrophilus torridus and its implications for life around pH 0.</title>
        <authorList>
            <person name="Fuetterer O."/>
            <person name="Angelov A."/>
            <person name="Liesegang H."/>
            <person name="Gottschalk G."/>
            <person name="Schleper C."/>
            <person name="Schepers B."/>
            <person name="Dock C."/>
            <person name="Antranikian G."/>
            <person name="Liebl W."/>
        </authorList>
    </citation>
    <scope>NUCLEOTIDE SEQUENCE [LARGE SCALE GENOMIC DNA]</scope>
    <source>
        <strain>ATCC 700027 / DSM 9790 / JCM 10055 / NBRC 100828 / KAW 2/3</strain>
    </source>
</reference>
<protein>
    <recommendedName>
        <fullName evidence="1">Ribose-5-phosphate isomerase A</fullName>
        <ecNumber evidence="1">5.3.1.6</ecNumber>
    </recommendedName>
    <alternativeName>
        <fullName evidence="1">Phosphoriboisomerase A</fullName>
        <shortName evidence="1">PRI</shortName>
    </alternativeName>
</protein>
<evidence type="ECO:0000255" key="1">
    <source>
        <dbReference type="HAMAP-Rule" id="MF_00170"/>
    </source>
</evidence>
<name>RPIA_PICTO</name>
<keyword id="KW-0413">Isomerase</keyword>
<comment type="function">
    <text evidence="1">Catalyzes the reversible conversion of ribose-5-phosphate to ribulose 5-phosphate.</text>
</comment>
<comment type="catalytic activity">
    <reaction evidence="1">
        <text>aldehydo-D-ribose 5-phosphate = D-ribulose 5-phosphate</text>
        <dbReference type="Rhea" id="RHEA:14657"/>
        <dbReference type="ChEBI" id="CHEBI:58121"/>
        <dbReference type="ChEBI" id="CHEBI:58273"/>
        <dbReference type="EC" id="5.3.1.6"/>
    </reaction>
</comment>
<comment type="pathway">
    <text evidence="1">Carbohydrate degradation; pentose phosphate pathway; D-ribose 5-phosphate from D-ribulose 5-phosphate (non-oxidative stage): step 1/1.</text>
</comment>
<comment type="subunit">
    <text evidence="1">Homodimer.</text>
</comment>
<comment type="similarity">
    <text evidence="1">Belongs to the ribose 5-phosphate isomerase family.</text>
</comment>
<sequence length="218" mass="24777">MFENEKRMAAMEALKFVRNDMRIGIGTGSTAYYFIEGLSELVKNGLRITGIPTSKKSEELCRSFNIPVDYNIKDIDIDFDGADEFDPYGNLIKGGGGALVREKIVAYNSREFYVLVDHSKYSERLHKFPLPVEVLPFMSEKTLENIERLGCRASFRDDKKFISDNGNYIIDCVFSYTDPELESQIKMIPGVVEVGIFRHLSTKIFQGTIDGCRIIDVK</sequence>